<evidence type="ECO:0000255" key="1">
    <source>
        <dbReference type="HAMAP-Rule" id="MF_00428"/>
    </source>
</evidence>
<sequence>MSSAKEIKKSILAPVLDNNPIALQVLGVCSALAVTTKLETAFVMTIAVMFVTALSNFFVSLIRNHIPNSVRIIVQMAIIASLVIVVDQVLKAYLYDISKQLSVFVGLIITNCIVMGRAEAFAMKSAPIPSFIDGLGNGLGYGFVLITVGFFRELLGSGKLFDMEVLPLVSNGGWYQPNGLMLLAPSAFFLIGFLIWAIRVFKPEQVEAKG</sequence>
<accession>B7VKD5</accession>
<proteinExistence type="inferred from homology"/>
<keyword id="KW-0997">Cell inner membrane</keyword>
<keyword id="KW-1003">Cell membrane</keyword>
<keyword id="KW-0406">Ion transport</keyword>
<keyword id="KW-0472">Membrane</keyword>
<keyword id="KW-0520">NAD</keyword>
<keyword id="KW-0915">Sodium</keyword>
<keyword id="KW-0739">Sodium transport</keyword>
<keyword id="KW-1278">Translocase</keyword>
<keyword id="KW-0812">Transmembrane</keyword>
<keyword id="KW-1133">Transmembrane helix</keyword>
<keyword id="KW-0813">Transport</keyword>
<keyword id="KW-0830">Ubiquinone</keyword>
<comment type="function">
    <text evidence="1">NQR complex catalyzes the reduction of ubiquinone-1 to ubiquinol by two successive reactions, coupled with the transport of Na(+) ions from the cytoplasm to the periplasm. NqrA to NqrE are probably involved in the second step, the conversion of ubisemiquinone to ubiquinol.</text>
</comment>
<comment type="catalytic activity">
    <reaction evidence="1">
        <text>a ubiquinone + n Na(+)(in) + NADH + H(+) = a ubiquinol + n Na(+)(out) + NAD(+)</text>
        <dbReference type="Rhea" id="RHEA:47748"/>
        <dbReference type="Rhea" id="RHEA-COMP:9565"/>
        <dbReference type="Rhea" id="RHEA-COMP:9566"/>
        <dbReference type="ChEBI" id="CHEBI:15378"/>
        <dbReference type="ChEBI" id="CHEBI:16389"/>
        <dbReference type="ChEBI" id="CHEBI:17976"/>
        <dbReference type="ChEBI" id="CHEBI:29101"/>
        <dbReference type="ChEBI" id="CHEBI:57540"/>
        <dbReference type="ChEBI" id="CHEBI:57945"/>
        <dbReference type="EC" id="7.2.1.1"/>
    </reaction>
</comment>
<comment type="subunit">
    <text evidence="1">Composed of six subunits; NqrA, NqrB, NqrC, NqrD, NqrE and NqrF.</text>
</comment>
<comment type="subcellular location">
    <subcellularLocation>
        <location evidence="1">Cell inner membrane</location>
        <topology evidence="1">Multi-pass membrane protein</topology>
    </subcellularLocation>
</comment>
<comment type="similarity">
    <text evidence="1">Belongs to the NqrDE/RnfAE family.</text>
</comment>
<feature type="chain" id="PRO_1000134934" description="Na(+)-translocating NADH-quinone reductase subunit D">
    <location>
        <begin position="1"/>
        <end position="210"/>
    </location>
</feature>
<feature type="transmembrane region" description="Helical" evidence="1">
    <location>
        <begin position="11"/>
        <end position="31"/>
    </location>
</feature>
<feature type="transmembrane region" description="Helical" evidence="1">
    <location>
        <begin position="42"/>
        <end position="62"/>
    </location>
</feature>
<feature type="transmembrane region" description="Helical" evidence="1">
    <location>
        <begin position="72"/>
        <end position="92"/>
    </location>
</feature>
<feature type="transmembrane region" description="Helical" evidence="1">
    <location>
        <begin position="103"/>
        <end position="123"/>
    </location>
</feature>
<feature type="transmembrane region" description="Helical" evidence="1">
    <location>
        <begin position="131"/>
        <end position="151"/>
    </location>
</feature>
<feature type="transmembrane region" description="Helical" evidence="1">
    <location>
        <begin position="178"/>
        <end position="198"/>
    </location>
</feature>
<organism>
    <name type="scientific">Vibrio atlanticus (strain LGP32)</name>
    <name type="common">Vibrio splendidus (strain Mel32)</name>
    <dbReference type="NCBI Taxonomy" id="575788"/>
    <lineage>
        <taxon>Bacteria</taxon>
        <taxon>Pseudomonadati</taxon>
        <taxon>Pseudomonadota</taxon>
        <taxon>Gammaproteobacteria</taxon>
        <taxon>Vibrionales</taxon>
        <taxon>Vibrionaceae</taxon>
        <taxon>Vibrio</taxon>
    </lineage>
</organism>
<dbReference type="EC" id="7.2.1.1" evidence="1"/>
<dbReference type="EMBL" id="FM954972">
    <property type="protein sequence ID" value="CAV17690.1"/>
    <property type="molecule type" value="Genomic_DNA"/>
</dbReference>
<dbReference type="SMR" id="B7VKD5"/>
<dbReference type="STRING" id="575788.VS_0696"/>
<dbReference type="KEGG" id="vsp:VS_0696"/>
<dbReference type="PATRIC" id="fig|575788.5.peg.2044"/>
<dbReference type="eggNOG" id="COG1347">
    <property type="taxonomic scope" value="Bacteria"/>
</dbReference>
<dbReference type="HOGENOM" id="CLU_046659_1_1_6"/>
<dbReference type="Proteomes" id="UP000009100">
    <property type="component" value="Chromosome 1"/>
</dbReference>
<dbReference type="GO" id="GO:0005886">
    <property type="term" value="C:plasma membrane"/>
    <property type="evidence" value="ECO:0007669"/>
    <property type="project" value="UniProtKB-SubCell"/>
</dbReference>
<dbReference type="GO" id="GO:0016655">
    <property type="term" value="F:oxidoreductase activity, acting on NAD(P)H, quinone or similar compound as acceptor"/>
    <property type="evidence" value="ECO:0007669"/>
    <property type="project" value="UniProtKB-UniRule"/>
</dbReference>
<dbReference type="GO" id="GO:0006814">
    <property type="term" value="P:sodium ion transport"/>
    <property type="evidence" value="ECO:0007669"/>
    <property type="project" value="UniProtKB-UniRule"/>
</dbReference>
<dbReference type="HAMAP" id="MF_00428">
    <property type="entry name" value="NqrD"/>
    <property type="match status" value="1"/>
</dbReference>
<dbReference type="InterPro" id="IPR011292">
    <property type="entry name" value="NqrD"/>
</dbReference>
<dbReference type="InterPro" id="IPR003667">
    <property type="entry name" value="NqrDE/RnfAE"/>
</dbReference>
<dbReference type="NCBIfam" id="TIGR01939">
    <property type="entry name" value="nqrD"/>
    <property type="match status" value="1"/>
</dbReference>
<dbReference type="NCBIfam" id="NF006777">
    <property type="entry name" value="PRK09292.1"/>
    <property type="match status" value="1"/>
</dbReference>
<dbReference type="NCBIfam" id="NF009070">
    <property type="entry name" value="PRK12405.1"/>
    <property type="match status" value="1"/>
</dbReference>
<dbReference type="PANTHER" id="PTHR30586">
    <property type="entry name" value="ELECTRON TRANSPORT COMPLEX PROTEIN RNFE"/>
    <property type="match status" value="1"/>
</dbReference>
<dbReference type="PANTHER" id="PTHR30586:SF1">
    <property type="entry name" value="NA(+)-TRANSLOCATING NADH-QUINONE REDUCTASE SUBUNIT D"/>
    <property type="match status" value="1"/>
</dbReference>
<dbReference type="Pfam" id="PF02508">
    <property type="entry name" value="Rnf-Nqr"/>
    <property type="match status" value="1"/>
</dbReference>
<dbReference type="PIRSF" id="PIRSF006102">
    <property type="entry name" value="NQR_DE"/>
    <property type="match status" value="1"/>
</dbReference>
<name>NQRD_VIBA3</name>
<reference key="1">
    <citation type="submission" date="2009-02" db="EMBL/GenBank/DDBJ databases">
        <title>Vibrio splendidus str. LGP32 complete genome.</title>
        <authorList>
            <person name="Mazel D."/>
            <person name="Le Roux F."/>
        </authorList>
    </citation>
    <scope>NUCLEOTIDE SEQUENCE [LARGE SCALE GENOMIC DNA]</scope>
    <source>
        <strain>LGP32</strain>
    </source>
</reference>
<gene>
    <name evidence="1" type="primary">nqrD</name>
    <name type="ordered locus">VS_0696</name>
</gene>
<protein>
    <recommendedName>
        <fullName evidence="1">Na(+)-translocating NADH-quinone reductase subunit D</fullName>
        <shortName evidence="1">Na(+)-NQR subunit D</shortName>
        <shortName evidence="1">Na(+)-translocating NQR subunit D</shortName>
        <ecNumber evidence="1">7.2.1.1</ecNumber>
    </recommendedName>
    <alternativeName>
        <fullName evidence="1">NQR complex subunit D</fullName>
    </alternativeName>
    <alternativeName>
        <fullName evidence="1">NQR-1 subunit D</fullName>
    </alternativeName>
</protein>